<gene>
    <name type="primary">ribU</name>
    <name type="ordered locus">stu0268</name>
</gene>
<protein>
    <recommendedName>
        <fullName>Riboflavin transporter RibU</fullName>
    </recommendedName>
    <alternativeName>
        <fullName>Riboflavin ECF transporter S component RibU</fullName>
    </alternativeName>
</protein>
<evidence type="ECO:0000255" key="1"/>
<evidence type="ECO:0000269" key="2">
    <source>
    </source>
</evidence>
<evidence type="ECO:0000305" key="3"/>
<evidence type="ECO:0000305" key="4">
    <source>
    </source>
</evidence>
<name>RIBU_STRT2</name>
<organism>
    <name type="scientific">Streptococcus thermophilus (strain ATCC BAA-250 / LMG 18311)</name>
    <dbReference type="NCBI Taxonomy" id="264199"/>
    <lineage>
        <taxon>Bacteria</taxon>
        <taxon>Bacillati</taxon>
        <taxon>Bacillota</taxon>
        <taxon>Bacilli</taxon>
        <taxon>Lactobacillales</taxon>
        <taxon>Streptococcaceae</taxon>
        <taxon>Streptococcus</taxon>
    </lineage>
</organism>
<accession>Q5M614</accession>
<reference key="1">
    <citation type="journal article" date="2004" name="Nat. Biotechnol.">
        <title>Complete sequence and comparative genome analysis of the dairy bacterium Streptococcus thermophilus.</title>
        <authorList>
            <person name="Bolotin A."/>
            <person name="Quinquis B."/>
            <person name="Renault P."/>
            <person name="Sorokin A."/>
            <person name="Ehrlich S.D."/>
            <person name="Kulakauskas S."/>
            <person name="Lapidus A."/>
            <person name="Goltsman E."/>
            <person name="Mazur M."/>
            <person name="Pusch G.D."/>
            <person name="Fonstein M."/>
            <person name="Overbeek R."/>
            <person name="Kyprides N."/>
            <person name="Purnelle B."/>
            <person name="Prozzi D."/>
            <person name="Ngui K."/>
            <person name="Masuy D."/>
            <person name="Hancy F."/>
            <person name="Burteau S."/>
            <person name="Boutry M."/>
            <person name="Delcour J."/>
            <person name="Goffeau A."/>
            <person name="Hols P."/>
        </authorList>
    </citation>
    <scope>NUCLEOTIDE SEQUENCE [LARGE SCALE GENOMIC DNA]</scope>
    <source>
        <strain>ATCC BAA-250 / LMG 18311</strain>
    </source>
</reference>
<reference key="2">
    <citation type="journal article" date="2013" name="Proc. Natl. Acad. Sci. U.S.A.">
        <title>Assembly and mechanism of a group II ECF transporter.</title>
        <authorList>
            <person name="Karpowich N.K."/>
            <person name="Wang D.N."/>
        </authorList>
    </citation>
    <scope>FUNCTION AS A TRANSPORT COMPONENT</scope>
    <scope>SUBUNIT</scope>
    <scope>SUBCELLULAR LOCATION</scope>
    <scope>EXPRESSION IN E.COLI</scope>
    <source>
        <strain>ATCC BAA-250 / LMG 18311</strain>
    </source>
</reference>
<feature type="chain" id="PRO_0000422261" description="Riboflavin transporter RibU">
    <location>
        <begin position="1"/>
        <end position="211"/>
    </location>
</feature>
<feature type="transmembrane region" description="Helical" evidence="1">
    <location>
        <begin position="34"/>
        <end position="54"/>
    </location>
</feature>
<feature type="transmembrane region" description="Helical" evidence="1">
    <location>
        <begin position="66"/>
        <end position="86"/>
    </location>
</feature>
<feature type="transmembrane region" description="Helical" evidence="1">
    <location>
        <begin position="104"/>
        <end position="124"/>
    </location>
</feature>
<feature type="transmembrane region" description="Helical" evidence="1">
    <location>
        <begin position="134"/>
        <end position="154"/>
    </location>
</feature>
<feature type="transmembrane region" description="Helical" evidence="1">
    <location>
        <begin position="180"/>
        <end position="200"/>
    </location>
</feature>
<proteinExistence type="evidence at protein level"/>
<keyword id="KW-1003">Cell membrane</keyword>
<keyword id="KW-0472">Membrane</keyword>
<keyword id="KW-1185">Reference proteome</keyword>
<keyword id="KW-0812">Transmembrane</keyword>
<keyword id="KW-1133">Transmembrane helix</keyword>
<keyword id="KW-0813">Transport</keyword>
<comment type="function">
    <text evidence="2 3">Substrate-binding (S) component of an energy-coupling factor (ECF) ABC-transporter complex. Mediates riboflavin uptake, may also transport FMN and roseoflavin. Probably a riboflavin-binding protein that interacts with the energy-coupling factor (ECF) ABC-transporter complex. Unlike classic ABC transporters this ECF transporter provides the energy necessary to transport a number of different substrates. The substrates themselves are bound by transmembrane, not extracytoplasmic soluble proteins (Probable). Expression of the complex plus RibU in E.coli allows riboflavin uptake.</text>
</comment>
<comment type="subunit">
    <text evidence="2">Forms a stable energy-coupling factor (ECF) transporter complex composed of 2 membrane-embedded substrate-binding proteins (S component), 2 ATP-binding proteins (A component) and 2 transmembrane proteins (T component) upon coexpression of the 4 components in E.coli.</text>
</comment>
<comment type="subcellular location">
    <subcellularLocation>
        <location evidence="4">Cell membrane</location>
        <topology evidence="4">Multi-pass membrane protein</topology>
    </subcellularLocation>
</comment>
<comment type="similarity">
    <text evidence="3">Belongs to the prokaryotic riboflavin transporter (P-RFT) (TC 2.A.87) family.</text>
</comment>
<sequence length="211" mass="23644">MRSLFFGIGKSIGNFFQIVKIWRNFFMTNTRKLAYIAILSAVSFLLLYFSFPLIPAADFLKVDFSILPVLIALVIFDFKSAIGVLLLRSLLKLLLNNGGPGSMIGLPMNFVALGVFVWGLSYFWKKNQTSKNYILGSVLGTILLTVAMVVLNYIYAVPLYAKFANFDIAQFIGLYKYLFAMVVPFNLLEGLIFSVAFALIYAPLKSILVKL</sequence>
<dbReference type="EMBL" id="CP000023">
    <property type="protein sequence ID" value="AAV59992.1"/>
    <property type="molecule type" value="Genomic_DNA"/>
</dbReference>
<dbReference type="SMR" id="Q5M614"/>
<dbReference type="STRING" id="264199.stu0268"/>
<dbReference type="TCDB" id="3.A.1.25.6">
    <property type="family name" value="the atp-binding cassette (abc) superfamily"/>
</dbReference>
<dbReference type="KEGG" id="stl:stu0268"/>
<dbReference type="eggNOG" id="COG3601">
    <property type="taxonomic scope" value="Bacteria"/>
</dbReference>
<dbReference type="HOGENOM" id="CLU_086673_2_1_9"/>
<dbReference type="Proteomes" id="UP000001170">
    <property type="component" value="Chromosome"/>
</dbReference>
<dbReference type="GO" id="GO:0005886">
    <property type="term" value="C:plasma membrane"/>
    <property type="evidence" value="ECO:0000314"/>
    <property type="project" value="UniProtKB"/>
</dbReference>
<dbReference type="GO" id="GO:0032217">
    <property type="term" value="F:riboflavin transmembrane transporter activity"/>
    <property type="evidence" value="ECO:0000316"/>
    <property type="project" value="UniProtKB"/>
</dbReference>
<dbReference type="GO" id="GO:0032218">
    <property type="term" value="P:riboflavin transport"/>
    <property type="evidence" value="ECO:0000316"/>
    <property type="project" value="UniProtKB"/>
</dbReference>
<dbReference type="FunFam" id="1.10.1760.20:FF:000004">
    <property type="entry name" value="Riboflavin transporter"/>
    <property type="match status" value="1"/>
</dbReference>
<dbReference type="Gene3D" id="1.10.1760.20">
    <property type="match status" value="1"/>
</dbReference>
<dbReference type="InterPro" id="IPR024529">
    <property type="entry name" value="ECF_trnsprt_substrate-spec"/>
</dbReference>
<dbReference type="InterPro" id="IPR025720">
    <property type="entry name" value="RibU"/>
</dbReference>
<dbReference type="PANTHER" id="PTHR38438">
    <property type="entry name" value="RIBOFLAVIN TRANSPORTER RIBU"/>
    <property type="match status" value="1"/>
</dbReference>
<dbReference type="PANTHER" id="PTHR38438:SF1">
    <property type="entry name" value="RIBOFLAVIN TRANSPORTER RIBU"/>
    <property type="match status" value="1"/>
</dbReference>
<dbReference type="Pfam" id="PF12822">
    <property type="entry name" value="ECF_trnsprt"/>
    <property type="match status" value="1"/>
</dbReference>
<dbReference type="PIRSF" id="PIRSF037778">
    <property type="entry name" value="UCP037778_transp_RibU"/>
    <property type="match status" value="1"/>
</dbReference>